<keyword id="KW-0067">ATP-binding</keyword>
<keyword id="KW-0963">Cytoplasm</keyword>
<keyword id="KW-0418">Kinase</keyword>
<keyword id="KW-0547">Nucleotide-binding</keyword>
<keyword id="KW-0808">Transferase</keyword>
<feature type="chain" id="PRO_0000170623" description="Guanylate kinase">
    <location>
        <begin position="1"/>
        <end position="211"/>
    </location>
</feature>
<feature type="domain" description="Guanylate kinase-like" evidence="1">
    <location>
        <begin position="5"/>
        <end position="184"/>
    </location>
</feature>
<feature type="binding site" evidence="1">
    <location>
        <begin position="12"/>
        <end position="19"/>
    </location>
    <ligand>
        <name>ATP</name>
        <dbReference type="ChEBI" id="CHEBI:30616"/>
    </ligand>
</feature>
<name>KGUA_STRP8</name>
<gene>
    <name evidence="1" type="primary">gmk</name>
    <name type="ordered locus">spyM18_1642</name>
</gene>
<sequence length="211" mass="24186">MSERGLLIVFSGPSGVGKGTVRQEIFSTPDHKFEYSVSMTTRPQRPGEVDGVDYFFRTREEFEELIKTGQMLEYAEYVGNYYGTPLTYVNETLDKGIDVFLEIEVQGALQVKSKVPDGVFVFLTPPDLDELEDRLVGRGTDSQEVIAQRIERAKEEIALMREYDYAVVNDEVALAAERVKRIIETEHFRVERVIGRYDKMIKITKNPFKAK</sequence>
<protein>
    <recommendedName>
        <fullName evidence="1">Guanylate kinase</fullName>
        <ecNumber evidence="1">2.7.4.8</ecNumber>
    </recommendedName>
    <alternativeName>
        <fullName evidence="1">GMP kinase</fullName>
    </alternativeName>
</protein>
<comment type="function">
    <text evidence="1">Essential for recycling GMP and indirectly, cGMP.</text>
</comment>
<comment type="catalytic activity">
    <reaction evidence="1">
        <text>GMP + ATP = GDP + ADP</text>
        <dbReference type="Rhea" id="RHEA:20780"/>
        <dbReference type="ChEBI" id="CHEBI:30616"/>
        <dbReference type="ChEBI" id="CHEBI:58115"/>
        <dbReference type="ChEBI" id="CHEBI:58189"/>
        <dbReference type="ChEBI" id="CHEBI:456216"/>
        <dbReference type="EC" id="2.7.4.8"/>
    </reaction>
</comment>
<comment type="subcellular location">
    <subcellularLocation>
        <location evidence="1">Cytoplasm</location>
    </subcellularLocation>
</comment>
<comment type="similarity">
    <text evidence="1">Belongs to the guanylate kinase family.</text>
</comment>
<proteinExistence type="inferred from homology"/>
<accession>P65223</accession>
<accession>Q8P001</accession>
<evidence type="ECO:0000255" key="1">
    <source>
        <dbReference type="HAMAP-Rule" id="MF_00328"/>
    </source>
</evidence>
<organism>
    <name type="scientific">Streptococcus pyogenes serotype M18 (strain MGAS8232)</name>
    <dbReference type="NCBI Taxonomy" id="186103"/>
    <lineage>
        <taxon>Bacteria</taxon>
        <taxon>Bacillati</taxon>
        <taxon>Bacillota</taxon>
        <taxon>Bacilli</taxon>
        <taxon>Lactobacillales</taxon>
        <taxon>Streptococcaceae</taxon>
        <taxon>Streptococcus</taxon>
    </lineage>
</organism>
<reference key="1">
    <citation type="journal article" date="2002" name="Proc. Natl. Acad. Sci. U.S.A.">
        <title>Genome sequence and comparative microarray analysis of serotype M18 group A Streptococcus strains associated with acute rheumatic fever outbreaks.</title>
        <authorList>
            <person name="Smoot J.C."/>
            <person name="Barbian K.D."/>
            <person name="Van Gompel J.J."/>
            <person name="Smoot L.M."/>
            <person name="Chaussee M.S."/>
            <person name="Sylva G.L."/>
            <person name="Sturdevant D.E."/>
            <person name="Ricklefs S.M."/>
            <person name="Porcella S.F."/>
            <person name="Parkins L.D."/>
            <person name="Beres S.B."/>
            <person name="Campbell D.S."/>
            <person name="Smith T.M."/>
            <person name="Zhang Q."/>
            <person name="Kapur V."/>
            <person name="Daly J.A."/>
            <person name="Veasy L.G."/>
            <person name="Musser J.M."/>
        </authorList>
    </citation>
    <scope>NUCLEOTIDE SEQUENCE [LARGE SCALE GENOMIC DNA]</scope>
    <source>
        <strain>MGAS8232</strain>
    </source>
</reference>
<dbReference type="EC" id="2.7.4.8" evidence="1"/>
<dbReference type="EMBL" id="AE009949">
    <property type="protein sequence ID" value="AAL98191.1"/>
    <property type="molecule type" value="Genomic_DNA"/>
</dbReference>
<dbReference type="RefSeq" id="WP_002983649.1">
    <property type="nucleotide sequence ID" value="NC_003485.1"/>
</dbReference>
<dbReference type="SMR" id="P65223"/>
<dbReference type="GeneID" id="69900497"/>
<dbReference type="KEGG" id="spm:spyM18_1642"/>
<dbReference type="HOGENOM" id="CLU_001715_1_2_9"/>
<dbReference type="GO" id="GO:0005829">
    <property type="term" value="C:cytosol"/>
    <property type="evidence" value="ECO:0007669"/>
    <property type="project" value="TreeGrafter"/>
</dbReference>
<dbReference type="GO" id="GO:0005524">
    <property type="term" value="F:ATP binding"/>
    <property type="evidence" value="ECO:0007669"/>
    <property type="project" value="UniProtKB-UniRule"/>
</dbReference>
<dbReference type="GO" id="GO:0004385">
    <property type="term" value="F:guanylate kinase activity"/>
    <property type="evidence" value="ECO:0007669"/>
    <property type="project" value="UniProtKB-UniRule"/>
</dbReference>
<dbReference type="CDD" id="cd00071">
    <property type="entry name" value="GMPK"/>
    <property type="match status" value="1"/>
</dbReference>
<dbReference type="FunFam" id="3.40.50.300:FF:000855">
    <property type="entry name" value="Guanylate kinase"/>
    <property type="match status" value="1"/>
</dbReference>
<dbReference type="FunFam" id="3.30.63.10:FF:000002">
    <property type="entry name" value="Guanylate kinase 1"/>
    <property type="match status" value="1"/>
</dbReference>
<dbReference type="Gene3D" id="3.30.63.10">
    <property type="entry name" value="Guanylate Kinase phosphate binding domain"/>
    <property type="match status" value="1"/>
</dbReference>
<dbReference type="Gene3D" id="3.40.50.300">
    <property type="entry name" value="P-loop containing nucleotide triphosphate hydrolases"/>
    <property type="match status" value="2"/>
</dbReference>
<dbReference type="HAMAP" id="MF_00328">
    <property type="entry name" value="Guanylate_kinase"/>
    <property type="match status" value="1"/>
</dbReference>
<dbReference type="InterPro" id="IPR008145">
    <property type="entry name" value="GK/Ca_channel_bsu"/>
</dbReference>
<dbReference type="InterPro" id="IPR008144">
    <property type="entry name" value="Guanylate_kin-like_dom"/>
</dbReference>
<dbReference type="InterPro" id="IPR017665">
    <property type="entry name" value="Guanylate_kinase"/>
</dbReference>
<dbReference type="InterPro" id="IPR020590">
    <property type="entry name" value="Guanylate_kinase_CS"/>
</dbReference>
<dbReference type="InterPro" id="IPR027417">
    <property type="entry name" value="P-loop_NTPase"/>
</dbReference>
<dbReference type="NCBIfam" id="TIGR03263">
    <property type="entry name" value="guanyl_kin"/>
    <property type="match status" value="1"/>
</dbReference>
<dbReference type="PANTHER" id="PTHR23117:SF13">
    <property type="entry name" value="GUANYLATE KINASE"/>
    <property type="match status" value="1"/>
</dbReference>
<dbReference type="PANTHER" id="PTHR23117">
    <property type="entry name" value="GUANYLATE KINASE-RELATED"/>
    <property type="match status" value="1"/>
</dbReference>
<dbReference type="Pfam" id="PF00625">
    <property type="entry name" value="Guanylate_kin"/>
    <property type="match status" value="1"/>
</dbReference>
<dbReference type="SMART" id="SM00072">
    <property type="entry name" value="GuKc"/>
    <property type="match status" value="1"/>
</dbReference>
<dbReference type="SUPFAM" id="SSF52540">
    <property type="entry name" value="P-loop containing nucleoside triphosphate hydrolases"/>
    <property type="match status" value="1"/>
</dbReference>
<dbReference type="PROSITE" id="PS00856">
    <property type="entry name" value="GUANYLATE_KINASE_1"/>
    <property type="match status" value="1"/>
</dbReference>
<dbReference type="PROSITE" id="PS50052">
    <property type="entry name" value="GUANYLATE_KINASE_2"/>
    <property type="match status" value="1"/>
</dbReference>